<name>RLMN_YERPB</name>
<evidence type="ECO:0000255" key="1">
    <source>
        <dbReference type="HAMAP-Rule" id="MF_01849"/>
    </source>
</evidence>
<evidence type="ECO:0000255" key="2">
    <source>
        <dbReference type="PROSITE-ProRule" id="PRU01266"/>
    </source>
</evidence>
<feature type="chain" id="PRO_0000350544" description="Dual-specificity RNA methyltransferase RlmN">
    <location>
        <begin position="1"/>
        <end position="398"/>
    </location>
</feature>
<feature type="domain" description="Radical SAM core" evidence="2">
    <location>
        <begin position="125"/>
        <end position="364"/>
    </location>
</feature>
<feature type="active site" description="Proton acceptor" evidence="1">
    <location>
        <position position="119"/>
    </location>
</feature>
<feature type="active site" description="S-methylcysteine intermediate" evidence="1">
    <location>
        <position position="369"/>
    </location>
</feature>
<feature type="binding site" evidence="1">
    <location>
        <position position="139"/>
    </location>
    <ligand>
        <name>[4Fe-4S] cluster</name>
        <dbReference type="ChEBI" id="CHEBI:49883"/>
        <note>4Fe-4S-S-AdoMet</note>
    </ligand>
</feature>
<feature type="binding site" evidence="1">
    <location>
        <position position="143"/>
    </location>
    <ligand>
        <name>[4Fe-4S] cluster</name>
        <dbReference type="ChEBI" id="CHEBI:49883"/>
        <note>4Fe-4S-S-AdoMet</note>
    </ligand>
</feature>
<feature type="binding site" evidence="1">
    <location>
        <position position="146"/>
    </location>
    <ligand>
        <name>[4Fe-4S] cluster</name>
        <dbReference type="ChEBI" id="CHEBI:49883"/>
        <note>4Fe-4S-S-AdoMet</note>
    </ligand>
</feature>
<feature type="binding site" evidence="1">
    <location>
        <begin position="193"/>
        <end position="194"/>
    </location>
    <ligand>
        <name>S-adenosyl-L-methionine</name>
        <dbReference type="ChEBI" id="CHEBI:59789"/>
    </ligand>
</feature>
<feature type="binding site" evidence="1">
    <location>
        <position position="225"/>
    </location>
    <ligand>
        <name>S-adenosyl-L-methionine</name>
        <dbReference type="ChEBI" id="CHEBI:59789"/>
    </ligand>
</feature>
<feature type="binding site" evidence="1">
    <location>
        <begin position="247"/>
        <end position="249"/>
    </location>
    <ligand>
        <name>S-adenosyl-L-methionine</name>
        <dbReference type="ChEBI" id="CHEBI:59789"/>
    </ligand>
</feature>
<feature type="binding site" evidence="1">
    <location>
        <position position="326"/>
    </location>
    <ligand>
        <name>S-adenosyl-L-methionine</name>
        <dbReference type="ChEBI" id="CHEBI:59789"/>
    </ligand>
</feature>
<feature type="disulfide bond" description="(transient)" evidence="1">
    <location>
        <begin position="132"/>
        <end position="369"/>
    </location>
</feature>
<dbReference type="EC" id="2.1.1.192" evidence="1"/>
<dbReference type="EMBL" id="CP001048">
    <property type="protein sequence ID" value="ACC89910.1"/>
    <property type="molecule type" value="Genomic_DNA"/>
</dbReference>
<dbReference type="RefSeq" id="WP_012413853.1">
    <property type="nucleotide sequence ID" value="NZ_CP009780.1"/>
</dbReference>
<dbReference type="SMR" id="B2K9Q3"/>
<dbReference type="GeneID" id="49785146"/>
<dbReference type="KEGG" id="ypb:YPTS_2953"/>
<dbReference type="PATRIC" id="fig|502801.10.peg.2383"/>
<dbReference type="GO" id="GO:0005737">
    <property type="term" value="C:cytoplasm"/>
    <property type="evidence" value="ECO:0007669"/>
    <property type="project" value="UniProtKB-SubCell"/>
</dbReference>
<dbReference type="GO" id="GO:0051539">
    <property type="term" value="F:4 iron, 4 sulfur cluster binding"/>
    <property type="evidence" value="ECO:0007669"/>
    <property type="project" value="UniProtKB-UniRule"/>
</dbReference>
<dbReference type="GO" id="GO:0046872">
    <property type="term" value="F:metal ion binding"/>
    <property type="evidence" value="ECO:0007669"/>
    <property type="project" value="UniProtKB-KW"/>
</dbReference>
<dbReference type="GO" id="GO:0070040">
    <property type="term" value="F:rRNA (adenine(2503)-C2-)-methyltransferase activity"/>
    <property type="evidence" value="ECO:0007669"/>
    <property type="project" value="UniProtKB-UniRule"/>
</dbReference>
<dbReference type="GO" id="GO:0019843">
    <property type="term" value="F:rRNA binding"/>
    <property type="evidence" value="ECO:0007669"/>
    <property type="project" value="UniProtKB-UniRule"/>
</dbReference>
<dbReference type="GO" id="GO:0002935">
    <property type="term" value="F:tRNA (adenine(37)-C2)-methyltransferase activity"/>
    <property type="evidence" value="ECO:0007669"/>
    <property type="project" value="UniProtKB-UniRule"/>
</dbReference>
<dbReference type="GO" id="GO:0000049">
    <property type="term" value="F:tRNA binding"/>
    <property type="evidence" value="ECO:0007669"/>
    <property type="project" value="UniProtKB-UniRule"/>
</dbReference>
<dbReference type="GO" id="GO:0070475">
    <property type="term" value="P:rRNA base methylation"/>
    <property type="evidence" value="ECO:0007669"/>
    <property type="project" value="UniProtKB-UniRule"/>
</dbReference>
<dbReference type="GO" id="GO:0030488">
    <property type="term" value="P:tRNA methylation"/>
    <property type="evidence" value="ECO:0007669"/>
    <property type="project" value="UniProtKB-UniRule"/>
</dbReference>
<dbReference type="CDD" id="cd01335">
    <property type="entry name" value="Radical_SAM"/>
    <property type="match status" value="1"/>
</dbReference>
<dbReference type="FunFam" id="1.10.150.530:FF:000001">
    <property type="entry name" value="Dual-specificity RNA methyltransferase RlmN"/>
    <property type="match status" value="1"/>
</dbReference>
<dbReference type="FunFam" id="3.20.20.70:FF:000008">
    <property type="entry name" value="Dual-specificity RNA methyltransferase RlmN"/>
    <property type="match status" value="1"/>
</dbReference>
<dbReference type="Gene3D" id="1.10.150.530">
    <property type="match status" value="1"/>
</dbReference>
<dbReference type="Gene3D" id="3.20.20.70">
    <property type="entry name" value="Aldolase class I"/>
    <property type="match status" value="1"/>
</dbReference>
<dbReference type="HAMAP" id="MF_01849">
    <property type="entry name" value="RNA_methyltr_RlmN"/>
    <property type="match status" value="1"/>
</dbReference>
<dbReference type="InterPro" id="IPR013785">
    <property type="entry name" value="Aldolase_TIM"/>
</dbReference>
<dbReference type="InterPro" id="IPR040072">
    <property type="entry name" value="Methyltransferase_A"/>
</dbReference>
<dbReference type="InterPro" id="IPR048641">
    <property type="entry name" value="RlmN_N"/>
</dbReference>
<dbReference type="InterPro" id="IPR027492">
    <property type="entry name" value="RNA_MTrfase_RlmN"/>
</dbReference>
<dbReference type="InterPro" id="IPR004383">
    <property type="entry name" value="rRNA_lsu_MTrfase_RlmN/Cfr"/>
</dbReference>
<dbReference type="InterPro" id="IPR007197">
    <property type="entry name" value="rSAM"/>
</dbReference>
<dbReference type="NCBIfam" id="NF008396">
    <property type="entry name" value="PRK11194.1"/>
    <property type="match status" value="1"/>
</dbReference>
<dbReference type="NCBIfam" id="TIGR00048">
    <property type="entry name" value="rRNA_mod_RlmN"/>
    <property type="match status" value="1"/>
</dbReference>
<dbReference type="PANTHER" id="PTHR30544">
    <property type="entry name" value="23S RRNA METHYLTRANSFERASE"/>
    <property type="match status" value="1"/>
</dbReference>
<dbReference type="PANTHER" id="PTHR30544:SF5">
    <property type="entry name" value="RADICAL SAM CORE DOMAIN-CONTAINING PROTEIN"/>
    <property type="match status" value="1"/>
</dbReference>
<dbReference type="Pfam" id="PF04055">
    <property type="entry name" value="Radical_SAM"/>
    <property type="match status" value="1"/>
</dbReference>
<dbReference type="Pfam" id="PF21016">
    <property type="entry name" value="RlmN_N"/>
    <property type="match status" value="1"/>
</dbReference>
<dbReference type="PIRSF" id="PIRSF006004">
    <property type="entry name" value="CHP00048"/>
    <property type="match status" value="1"/>
</dbReference>
<dbReference type="SFLD" id="SFLDF00275">
    <property type="entry name" value="adenosine_C2_methyltransferase"/>
    <property type="match status" value="1"/>
</dbReference>
<dbReference type="SFLD" id="SFLDG01062">
    <property type="entry name" value="methyltransferase_(Class_A)"/>
    <property type="match status" value="1"/>
</dbReference>
<dbReference type="SUPFAM" id="SSF102114">
    <property type="entry name" value="Radical SAM enzymes"/>
    <property type="match status" value="1"/>
</dbReference>
<dbReference type="PROSITE" id="PS51918">
    <property type="entry name" value="RADICAL_SAM"/>
    <property type="match status" value="1"/>
</dbReference>
<gene>
    <name evidence="1" type="primary">rlmN</name>
    <name type="ordered locus">YPTS_2953</name>
</gene>
<keyword id="KW-0004">4Fe-4S</keyword>
<keyword id="KW-0963">Cytoplasm</keyword>
<keyword id="KW-1015">Disulfide bond</keyword>
<keyword id="KW-0408">Iron</keyword>
<keyword id="KW-0411">Iron-sulfur</keyword>
<keyword id="KW-0479">Metal-binding</keyword>
<keyword id="KW-0489">Methyltransferase</keyword>
<keyword id="KW-0698">rRNA processing</keyword>
<keyword id="KW-0949">S-adenosyl-L-methionine</keyword>
<keyword id="KW-0808">Transferase</keyword>
<keyword id="KW-0819">tRNA processing</keyword>
<sequence>MSEQLLTASTPIDAAPLSDNTVQTTAPATSKINLLDLNRQQMREFFAEMGEKPFRADQVMKWMYHYCYDDFEQMTDINKGLRAKLQRVAEIRAPEVAEEQRSVDGTIKWAIKVGDQQVETVYIPEADRATLCVSSQVGCALECKFCSTAQQGFNRNLRVSEIIGQVWRAAKIIGSLKSTGTRPITNVVMMGMGEPLLNLNNVVPAMDIMMDDFGFGLSKRRVTLSTSGVVPALDKLGDMIDVALAISLHAPTDDIRDEIVPINRKYNIEMFLAAVRRYLDKSKANGGRVTVEYVMLDHINDSTEQAHQLAECLKDTPCKINLIPWNPFPGAPYGRSSNSRVDRFSKVLMEYGFTTIVRKTRGDDIDAACGQLAGEVIDRTKRTLKKKMAGEPIAIKTV</sequence>
<comment type="function">
    <text evidence="1">Specifically methylates position 2 of adenine 2503 in 23S rRNA and position 2 of adenine 37 in tRNAs. m2A2503 modification seems to play a crucial role in the proofreading step occurring at the peptidyl transferase center and thus would serve to optimize ribosomal fidelity.</text>
</comment>
<comment type="catalytic activity">
    <reaction evidence="1">
        <text>adenosine(2503) in 23S rRNA + 2 reduced [2Fe-2S]-[ferredoxin] + 2 S-adenosyl-L-methionine = 2-methyladenosine(2503) in 23S rRNA + 5'-deoxyadenosine + L-methionine + 2 oxidized [2Fe-2S]-[ferredoxin] + S-adenosyl-L-homocysteine</text>
        <dbReference type="Rhea" id="RHEA:42916"/>
        <dbReference type="Rhea" id="RHEA-COMP:10000"/>
        <dbReference type="Rhea" id="RHEA-COMP:10001"/>
        <dbReference type="Rhea" id="RHEA-COMP:10152"/>
        <dbReference type="Rhea" id="RHEA-COMP:10282"/>
        <dbReference type="ChEBI" id="CHEBI:17319"/>
        <dbReference type="ChEBI" id="CHEBI:33737"/>
        <dbReference type="ChEBI" id="CHEBI:33738"/>
        <dbReference type="ChEBI" id="CHEBI:57844"/>
        <dbReference type="ChEBI" id="CHEBI:57856"/>
        <dbReference type="ChEBI" id="CHEBI:59789"/>
        <dbReference type="ChEBI" id="CHEBI:74411"/>
        <dbReference type="ChEBI" id="CHEBI:74497"/>
        <dbReference type="EC" id="2.1.1.192"/>
    </reaction>
</comment>
<comment type="catalytic activity">
    <reaction evidence="1">
        <text>adenosine(37) in tRNA + 2 reduced [2Fe-2S]-[ferredoxin] + 2 S-adenosyl-L-methionine = 2-methyladenosine(37) in tRNA + 5'-deoxyadenosine + L-methionine + 2 oxidized [2Fe-2S]-[ferredoxin] + S-adenosyl-L-homocysteine</text>
        <dbReference type="Rhea" id="RHEA:43332"/>
        <dbReference type="Rhea" id="RHEA-COMP:10000"/>
        <dbReference type="Rhea" id="RHEA-COMP:10001"/>
        <dbReference type="Rhea" id="RHEA-COMP:10162"/>
        <dbReference type="Rhea" id="RHEA-COMP:10485"/>
        <dbReference type="ChEBI" id="CHEBI:17319"/>
        <dbReference type="ChEBI" id="CHEBI:33737"/>
        <dbReference type="ChEBI" id="CHEBI:33738"/>
        <dbReference type="ChEBI" id="CHEBI:57844"/>
        <dbReference type="ChEBI" id="CHEBI:57856"/>
        <dbReference type="ChEBI" id="CHEBI:59789"/>
        <dbReference type="ChEBI" id="CHEBI:74411"/>
        <dbReference type="ChEBI" id="CHEBI:74497"/>
        <dbReference type="EC" id="2.1.1.192"/>
    </reaction>
</comment>
<comment type="cofactor">
    <cofactor evidence="1">
        <name>[4Fe-4S] cluster</name>
        <dbReference type="ChEBI" id="CHEBI:49883"/>
    </cofactor>
    <text evidence="1">Binds 1 [4Fe-4S] cluster. The cluster is coordinated with 3 cysteines and an exchangeable S-adenosyl-L-methionine.</text>
</comment>
<comment type="subcellular location">
    <subcellularLocation>
        <location evidence="1">Cytoplasm</location>
    </subcellularLocation>
</comment>
<comment type="miscellaneous">
    <text evidence="1">Reaction proceeds by a ping-pong mechanism involving intermediate methylation of a conserved cysteine residue.</text>
</comment>
<comment type="similarity">
    <text evidence="1">Belongs to the radical SAM superfamily. RlmN family.</text>
</comment>
<reference key="1">
    <citation type="submission" date="2008-04" db="EMBL/GenBank/DDBJ databases">
        <title>Complete sequence of Yersinia pseudotuberculosis PB1/+.</title>
        <authorList>
            <person name="Copeland A."/>
            <person name="Lucas S."/>
            <person name="Lapidus A."/>
            <person name="Glavina del Rio T."/>
            <person name="Dalin E."/>
            <person name="Tice H."/>
            <person name="Bruce D."/>
            <person name="Goodwin L."/>
            <person name="Pitluck S."/>
            <person name="Munk A.C."/>
            <person name="Brettin T."/>
            <person name="Detter J.C."/>
            <person name="Han C."/>
            <person name="Tapia R."/>
            <person name="Schmutz J."/>
            <person name="Larimer F."/>
            <person name="Land M."/>
            <person name="Hauser L."/>
            <person name="Challacombe J.F."/>
            <person name="Green L."/>
            <person name="Lindler L.E."/>
            <person name="Nikolich M.P."/>
            <person name="Richardson P."/>
        </authorList>
    </citation>
    <scope>NUCLEOTIDE SEQUENCE [LARGE SCALE GENOMIC DNA]</scope>
    <source>
        <strain>PB1/+</strain>
    </source>
</reference>
<proteinExistence type="inferred from homology"/>
<accession>B2K9Q3</accession>
<protein>
    <recommendedName>
        <fullName evidence="1">Dual-specificity RNA methyltransferase RlmN</fullName>
        <ecNumber evidence="1">2.1.1.192</ecNumber>
    </recommendedName>
    <alternativeName>
        <fullName evidence="1">23S rRNA (adenine(2503)-C(2))-methyltransferase</fullName>
    </alternativeName>
    <alternativeName>
        <fullName evidence="1">23S rRNA m2A2503 methyltransferase</fullName>
    </alternativeName>
    <alternativeName>
        <fullName evidence="1">Ribosomal RNA large subunit methyltransferase N</fullName>
    </alternativeName>
    <alternativeName>
        <fullName evidence="1">tRNA (adenine(37)-C(2))-methyltransferase</fullName>
    </alternativeName>
    <alternativeName>
        <fullName evidence="1">tRNA m2A37 methyltransferase</fullName>
    </alternativeName>
</protein>
<organism>
    <name type="scientific">Yersinia pseudotuberculosis serotype IB (strain PB1/+)</name>
    <dbReference type="NCBI Taxonomy" id="502801"/>
    <lineage>
        <taxon>Bacteria</taxon>
        <taxon>Pseudomonadati</taxon>
        <taxon>Pseudomonadota</taxon>
        <taxon>Gammaproteobacteria</taxon>
        <taxon>Enterobacterales</taxon>
        <taxon>Yersiniaceae</taxon>
        <taxon>Yersinia</taxon>
    </lineage>
</organism>